<organism>
    <name type="scientific">Rickettsia felis (strain ATCC VR-1525 / URRWXCal2)</name>
    <name type="common">Rickettsia azadi</name>
    <dbReference type="NCBI Taxonomy" id="315456"/>
    <lineage>
        <taxon>Bacteria</taxon>
        <taxon>Pseudomonadati</taxon>
        <taxon>Pseudomonadota</taxon>
        <taxon>Alphaproteobacteria</taxon>
        <taxon>Rickettsiales</taxon>
        <taxon>Rickettsiaceae</taxon>
        <taxon>Rickettsieae</taxon>
        <taxon>Rickettsia</taxon>
        <taxon>spotted fever group</taxon>
    </lineage>
</organism>
<evidence type="ECO:0000250" key="1"/>
<evidence type="ECO:0000255" key="2"/>
<evidence type="ECO:0000305" key="3"/>
<comment type="function">
    <text evidence="1">NDH-1 shuttles electrons from NADH, via FMN and iron-sulfur (Fe-S) centers, to quinones in the respiratory chain. Couples the redox reaction to proton translocation (for every two electrons transferred, four hydrogen ions are translocated across the cytoplasmic membrane), and thus conserves the redox energy in a proton gradient (By similarity).</text>
</comment>
<comment type="catalytic activity">
    <reaction>
        <text>a quinone + NADH + 5 H(+)(in) = a quinol + NAD(+) + 4 H(+)(out)</text>
        <dbReference type="Rhea" id="RHEA:57888"/>
        <dbReference type="ChEBI" id="CHEBI:15378"/>
        <dbReference type="ChEBI" id="CHEBI:24646"/>
        <dbReference type="ChEBI" id="CHEBI:57540"/>
        <dbReference type="ChEBI" id="CHEBI:57945"/>
        <dbReference type="ChEBI" id="CHEBI:132124"/>
    </reaction>
</comment>
<comment type="subcellular location">
    <subcellularLocation>
        <location>Cell membrane</location>
        <topology>Multi-pass membrane protein</topology>
    </subcellularLocation>
</comment>
<comment type="similarity">
    <text evidence="3">Belongs to the complex I subunit 6 family.</text>
</comment>
<accession>Q4UK29</accession>
<proteinExistence type="inferred from homology"/>
<dbReference type="EC" id="7.1.1.-"/>
<dbReference type="EMBL" id="CP000053">
    <property type="protein sequence ID" value="AAY62106.1"/>
    <property type="molecule type" value="Genomic_DNA"/>
</dbReference>
<dbReference type="SMR" id="Q4UK29"/>
<dbReference type="STRING" id="315456.RF_1255"/>
<dbReference type="KEGG" id="rfe:RF_1255"/>
<dbReference type="eggNOG" id="COG0839">
    <property type="taxonomic scope" value="Bacteria"/>
</dbReference>
<dbReference type="HOGENOM" id="CLU_085957_5_1_5"/>
<dbReference type="OrthoDB" id="9795409at2"/>
<dbReference type="Proteomes" id="UP000008548">
    <property type="component" value="Chromosome"/>
</dbReference>
<dbReference type="GO" id="GO:0005886">
    <property type="term" value="C:plasma membrane"/>
    <property type="evidence" value="ECO:0007669"/>
    <property type="project" value="UniProtKB-SubCell"/>
</dbReference>
<dbReference type="GO" id="GO:0008137">
    <property type="term" value="F:NADH dehydrogenase (ubiquinone) activity"/>
    <property type="evidence" value="ECO:0007669"/>
    <property type="project" value="InterPro"/>
</dbReference>
<dbReference type="GO" id="GO:0048038">
    <property type="term" value="F:quinone binding"/>
    <property type="evidence" value="ECO:0007669"/>
    <property type="project" value="UniProtKB-KW"/>
</dbReference>
<dbReference type="Gene3D" id="1.20.120.1200">
    <property type="entry name" value="NADH-ubiquinone/plastoquinone oxidoreductase chain 6, subunit NuoJ"/>
    <property type="match status" value="1"/>
</dbReference>
<dbReference type="InterPro" id="IPR001457">
    <property type="entry name" value="NADH_UbQ/plastoQ_OxRdtase_su6"/>
</dbReference>
<dbReference type="InterPro" id="IPR042106">
    <property type="entry name" value="Nuo/plastoQ_OxRdtase_6_NuoJ"/>
</dbReference>
<dbReference type="NCBIfam" id="NF005164">
    <property type="entry name" value="PRK06638.1-4"/>
    <property type="match status" value="1"/>
</dbReference>
<dbReference type="PANTHER" id="PTHR33269">
    <property type="entry name" value="NADH-UBIQUINONE OXIDOREDUCTASE CHAIN 6"/>
    <property type="match status" value="1"/>
</dbReference>
<dbReference type="PANTHER" id="PTHR33269:SF17">
    <property type="entry name" value="NADH-UBIQUINONE OXIDOREDUCTASE CHAIN 6"/>
    <property type="match status" value="1"/>
</dbReference>
<dbReference type="Pfam" id="PF00499">
    <property type="entry name" value="Oxidored_q3"/>
    <property type="match status" value="1"/>
</dbReference>
<protein>
    <recommendedName>
        <fullName>NADH-quinone oxidoreductase subunit J</fullName>
        <ecNumber>7.1.1.-</ecNumber>
    </recommendedName>
    <alternativeName>
        <fullName>NADH dehydrogenase I subunit J</fullName>
    </alternativeName>
    <alternativeName>
        <fullName>NDH-1 subunit J</fullName>
    </alternativeName>
</protein>
<sequence>MFIFFYLFATLITISSLCVVLSKNSVYSVLWLIFAFINGAGLMILLGAEFLAMMLIVIYVGAVAVLFLFVIMMLDMHFNKTITQLKENLALSSFIALIMFADLVTIILLGTKNINFISDVSFTITNDISNTKAIGKVLYTDFMLPFQMAGLILFVAMIACITLTLKKREGVKHQDITKQLSHNKSNVVLMTKPTLNKGVENIKYE</sequence>
<keyword id="KW-1003">Cell membrane</keyword>
<keyword id="KW-0472">Membrane</keyword>
<keyword id="KW-0520">NAD</keyword>
<keyword id="KW-0874">Quinone</keyword>
<keyword id="KW-1278">Translocase</keyword>
<keyword id="KW-0812">Transmembrane</keyword>
<keyword id="KW-1133">Transmembrane helix</keyword>
<name>NUOJ_RICFE</name>
<reference key="1">
    <citation type="journal article" date="2005" name="PLoS Biol.">
        <title>The genome sequence of Rickettsia felis identifies the first putative conjugative plasmid in an obligate intracellular parasite.</title>
        <authorList>
            <person name="Ogata H."/>
            <person name="Renesto P."/>
            <person name="Audic S."/>
            <person name="Robert C."/>
            <person name="Blanc G."/>
            <person name="Fournier P.-E."/>
            <person name="Parinello H."/>
            <person name="Claverie J.-M."/>
            <person name="Raoult D."/>
        </authorList>
    </citation>
    <scope>NUCLEOTIDE SEQUENCE [LARGE SCALE GENOMIC DNA]</scope>
    <source>
        <strain>ATCC VR-1525 / URRWXCal2</strain>
    </source>
</reference>
<gene>
    <name type="primary">nuoJ</name>
    <name type="ordered locus">RF_1255</name>
</gene>
<feature type="chain" id="PRO_0000287840" description="NADH-quinone oxidoreductase subunit J">
    <location>
        <begin position="1"/>
        <end position="205"/>
    </location>
</feature>
<feature type="transmembrane region" description="Helical" evidence="2">
    <location>
        <begin position="1"/>
        <end position="21"/>
    </location>
</feature>
<feature type="transmembrane region" description="Helical" evidence="2">
    <location>
        <begin position="26"/>
        <end position="46"/>
    </location>
</feature>
<feature type="transmembrane region" description="Helical" evidence="2">
    <location>
        <begin position="54"/>
        <end position="74"/>
    </location>
</feature>
<feature type="transmembrane region" description="Helical" evidence="2">
    <location>
        <begin position="89"/>
        <end position="109"/>
    </location>
</feature>
<feature type="transmembrane region" description="Helical" evidence="2">
    <location>
        <begin position="142"/>
        <end position="162"/>
    </location>
</feature>